<evidence type="ECO:0000255" key="1">
    <source>
        <dbReference type="HAMAP-Rule" id="MF_00306"/>
    </source>
</evidence>
<reference key="1">
    <citation type="journal article" date="2002" name="Proc. Natl. Acad. Sci. U.S.A.">
        <title>Genome sequence of the hyperthermophilic crenarchaeon Pyrobaculum aerophilum.</title>
        <authorList>
            <person name="Fitz-Gibbon S.T."/>
            <person name="Ladner H."/>
            <person name="Kim U.-J."/>
            <person name="Stetter K.O."/>
            <person name="Simon M.I."/>
            <person name="Miller J.H."/>
        </authorList>
    </citation>
    <scope>NUCLEOTIDE SEQUENCE [LARGE SCALE GENOMIC DNA]</scope>
    <source>
        <strain>ATCC 51768 / DSM 7523 / JCM 9630 / CIP 104966 / NBRC 100827 / IM2</strain>
    </source>
</reference>
<name>SRP54_PYRAE</name>
<organism>
    <name type="scientific">Pyrobaculum aerophilum (strain ATCC 51768 / DSM 7523 / JCM 9630 / CIP 104966 / NBRC 100827 / IM2)</name>
    <dbReference type="NCBI Taxonomy" id="178306"/>
    <lineage>
        <taxon>Archaea</taxon>
        <taxon>Thermoproteota</taxon>
        <taxon>Thermoprotei</taxon>
        <taxon>Thermoproteales</taxon>
        <taxon>Thermoproteaceae</taxon>
        <taxon>Pyrobaculum</taxon>
    </lineage>
</organism>
<dbReference type="EC" id="3.6.5.4" evidence="1"/>
<dbReference type="EMBL" id="AE009441">
    <property type="protein sequence ID" value="AAL64868.1"/>
    <property type="molecule type" value="Genomic_DNA"/>
</dbReference>
<dbReference type="RefSeq" id="WP_011009335.1">
    <property type="nucleotide sequence ID" value="NC_003364.1"/>
</dbReference>
<dbReference type="SMR" id="Q8ZT95"/>
<dbReference type="FunCoup" id="Q8ZT95">
    <property type="interactions" value="221"/>
</dbReference>
<dbReference type="STRING" id="178306.PAE3365"/>
<dbReference type="EnsemblBacteria" id="AAL64868">
    <property type="protein sequence ID" value="AAL64868"/>
    <property type="gene ID" value="PAE3365"/>
</dbReference>
<dbReference type="GeneID" id="1464061"/>
<dbReference type="KEGG" id="pai:PAE3365"/>
<dbReference type="PATRIC" id="fig|178306.9.peg.2533"/>
<dbReference type="eggNOG" id="arCOG01228">
    <property type="taxonomic scope" value="Archaea"/>
</dbReference>
<dbReference type="HOGENOM" id="CLU_009301_6_0_2"/>
<dbReference type="InParanoid" id="Q8ZT95"/>
<dbReference type="Proteomes" id="UP000002439">
    <property type="component" value="Chromosome"/>
</dbReference>
<dbReference type="GO" id="GO:0048500">
    <property type="term" value="C:signal recognition particle"/>
    <property type="evidence" value="ECO:0007669"/>
    <property type="project" value="UniProtKB-UniRule"/>
</dbReference>
<dbReference type="GO" id="GO:0008312">
    <property type="term" value="F:7S RNA binding"/>
    <property type="evidence" value="ECO:0007669"/>
    <property type="project" value="UniProtKB-UniRule"/>
</dbReference>
<dbReference type="GO" id="GO:0016887">
    <property type="term" value="F:ATP hydrolysis activity"/>
    <property type="evidence" value="ECO:0007669"/>
    <property type="project" value="InterPro"/>
</dbReference>
<dbReference type="GO" id="GO:0005525">
    <property type="term" value="F:GTP binding"/>
    <property type="evidence" value="ECO:0007669"/>
    <property type="project" value="UniProtKB-UniRule"/>
</dbReference>
<dbReference type="GO" id="GO:0003924">
    <property type="term" value="F:GTPase activity"/>
    <property type="evidence" value="ECO:0007669"/>
    <property type="project" value="UniProtKB-UniRule"/>
</dbReference>
<dbReference type="GO" id="GO:0006614">
    <property type="term" value="P:SRP-dependent cotranslational protein targeting to membrane"/>
    <property type="evidence" value="ECO:0007669"/>
    <property type="project" value="InterPro"/>
</dbReference>
<dbReference type="CDD" id="cd17875">
    <property type="entry name" value="SRP54_G"/>
    <property type="match status" value="1"/>
</dbReference>
<dbReference type="FunFam" id="3.40.50.300:FF:000022">
    <property type="entry name" value="Signal recognition particle 54 kDa subunit"/>
    <property type="match status" value="1"/>
</dbReference>
<dbReference type="Gene3D" id="3.40.50.300">
    <property type="entry name" value="P-loop containing nucleotide triphosphate hydrolases"/>
    <property type="match status" value="1"/>
</dbReference>
<dbReference type="Gene3D" id="1.20.120.140">
    <property type="entry name" value="Signal recognition particle SRP54, nucleotide-binding domain"/>
    <property type="match status" value="1"/>
</dbReference>
<dbReference type="Gene3D" id="1.10.260.30">
    <property type="entry name" value="Signal recognition particle, SRP54 subunit, M-domain"/>
    <property type="match status" value="1"/>
</dbReference>
<dbReference type="HAMAP" id="MF_00306">
    <property type="entry name" value="SRP54"/>
    <property type="match status" value="1"/>
</dbReference>
<dbReference type="InterPro" id="IPR003593">
    <property type="entry name" value="AAA+_ATPase"/>
</dbReference>
<dbReference type="InterPro" id="IPR027417">
    <property type="entry name" value="P-loop_NTPase"/>
</dbReference>
<dbReference type="InterPro" id="IPR036891">
    <property type="entry name" value="Signal_recog_part_SRP54_M_sf"/>
</dbReference>
<dbReference type="InterPro" id="IPR013822">
    <property type="entry name" value="Signal_recog_particl_SRP54_hlx"/>
</dbReference>
<dbReference type="InterPro" id="IPR004125">
    <property type="entry name" value="Signal_recog_particle_SRP54_M"/>
</dbReference>
<dbReference type="InterPro" id="IPR036225">
    <property type="entry name" value="SRP/SRP_N"/>
</dbReference>
<dbReference type="InterPro" id="IPR022941">
    <property type="entry name" value="SRP54"/>
</dbReference>
<dbReference type="InterPro" id="IPR000897">
    <property type="entry name" value="SRP54_GTPase_dom"/>
</dbReference>
<dbReference type="InterPro" id="IPR042101">
    <property type="entry name" value="SRP54_N_sf"/>
</dbReference>
<dbReference type="PANTHER" id="PTHR11564">
    <property type="entry name" value="SIGNAL RECOGNITION PARTICLE 54K PROTEIN SRP54"/>
    <property type="match status" value="1"/>
</dbReference>
<dbReference type="PANTHER" id="PTHR11564:SF5">
    <property type="entry name" value="SIGNAL RECOGNITION PARTICLE SUBUNIT SRP54"/>
    <property type="match status" value="1"/>
</dbReference>
<dbReference type="Pfam" id="PF00448">
    <property type="entry name" value="SRP54"/>
    <property type="match status" value="1"/>
</dbReference>
<dbReference type="Pfam" id="PF02881">
    <property type="entry name" value="SRP54_N"/>
    <property type="match status" value="1"/>
</dbReference>
<dbReference type="Pfam" id="PF02978">
    <property type="entry name" value="SRP_SPB"/>
    <property type="match status" value="1"/>
</dbReference>
<dbReference type="SMART" id="SM00382">
    <property type="entry name" value="AAA"/>
    <property type="match status" value="1"/>
</dbReference>
<dbReference type="SMART" id="SM00962">
    <property type="entry name" value="SRP54"/>
    <property type="match status" value="1"/>
</dbReference>
<dbReference type="SMART" id="SM00963">
    <property type="entry name" value="SRP54_N"/>
    <property type="match status" value="1"/>
</dbReference>
<dbReference type="SUPFAM" id="SSF47364">
    <property type="entry name" value="Domain of the SRP/SRP receptor G-proteins"/>
    <property type="match status" value="1"/>
</dbReference>
<dbReference type="SUPFAM" id="SSF52540">
    <property type="entry name" value="P-loop containing nucleoside triphosphate hydrolases"/>
    <property type="match status" value="1"/>
</dbReference>
<dbReference type="SUPFAM" id="SSF47446">
    <property type="entry name" value="Signal peptide-binding domain"/>
    <property type="match status" value="1"/>
</dbReference>
<protein>
    <recommendedName>
        <fullName evidence="1">Signal recognition particle 54 kDa protein</fullName>
        <shortName evidence="1">SRP54</shortName>
        <ecNumber evidence="1">3.6.5.4</ecNumber>
    </recommendedName>
</protein>
<gene>
    <name evidence="1" type="primary">srp54</name>
    <name type="ordered locus">PAE3365</name>
</gene>
<accession>Q8ZT95</accession>
<keyword id="KW-0963">Cytoplasm</keyword>
<keyword id="KW-0342">GTP-binding</keyword>
<keyword id="KW-0378">Hydrolase</keyword>
<keyword id="KW-0547">Nucleotide-binding</keyword>
<keyword id="KW-1185">Reference proteome</keyword>
<keyword id="KW-0687">Ribonucleoprotein</keyword>
<keyword id="KW-0694">RNA-binding</keyword>
<keyword id="KW-0733">Signal recognition particle</keyword>
<comment type="function">
    <text evidence="1">Involved in targeting and insertion of nascent membrane proteins into the cytoplasmic membrane. Binds to the hydrophobic signal sequence of the ribosome-nascent chain (RNC) as it emerges from the ribosomes. The SRP-RNC complex is then targeted to the cytoplasmic membrane where it interacts with the SRP receptor FtsY.</text>
</comment>
<comment type="catalytic activity">
    <reaction evidence="1">
        <text>GTP + H2O = GDP + phosphate + H(+)</text>
        <dbReference type="Rhea" id="RHEA:19669"/>
        <dbReference type="ChEBI" id="CHEBI:15377"/>
        <dbReference type="ChEBI" id="CHEBI:15378"/>
        <dbReference type="ChEBI" id="CHEBI:37565"/>
        <dbReference type="ChEBI" id="CHEBI:43474"/>
        <dbReference type="ChEBI" id="CHEBI:58189"/>
        <dbReference type="EC" id="3.6.5.4"/>
    </reaction>
</comment>
<comment type="subunit">
    <text evidence="1">Part of the signal recognition particle protein translocation system, which is composed of SRP and FtsY. Archaeal SRP consists of a 7S RNA molecule of 300 nucleotides and two protein subunits: SRP54 and SRP19.</text>
</comment>
<comment type="subcellular location">
    <subcellularLocation>
        <location evidence="1">Cytoplasm</location>
    </subcellularLocation>
    <text evidence="1">The SRP-RNC complex is targeted to the cytoplasmic membrane.</text>
</comment>
<comment type="domain">
    <text evidence="1">Composed of three domains: the N-terminal N domain, which is responsible for interactions with the ribosome, the central G domain, which binds GTP, and the C-terminal M domain, which binds the RNA and the signal sequence of the RNC.</text>
</comment>
<comment type="similarity">
    <text evidence="1">Belongs to the GTP-binding SRP family. SRP54 subfamily.</text>
</comment>
<sequence>MKALTEIFGKLLEKIRGVDYIDEATLQELSREIQRTLLKADVPLDLVKSFTENAVKRIKEEKPPAGIPPREYLIYVLYEELVKLLGGEQPAEFKPTKKPYIVLLLGVEGSGKTTTAAKLAKYLAKRGYKVGLVETDTIRPAAFDQLRQLAEKIGVPFYGERDGKDAVEIAKRGVQNFKNMDVIIVDTAGRHRNEEALLKEVRAIYDAVSPDEVVLVIDATVGKMAAAQAEAFMKYLPIHSVIITKMDSTARGGGALAAVAKTGAKVKFIGVGEDVDEFEQFSPRKFVARVLGMGDLDTLLEKIKAVFEEEEVLEEIESGRLDLLTFKKQIDSLLKLGPLSKVFQLLPGNLAAKISEEQIELSQRNLKKWRAILSSMTLEELKNPEILNASRIRRIALGAGVAPKDVKEMLTVYENLRKMSKTLRRQLRLRMAK</sequence>
<feature type="chain" id="PRO_0000101182" description="Signal recognition particle 54 kDa protein">
    <location>
        <begin position="1"/>
        <end position="433"/>
    </location>
</feature>
<feature type="binding site" evidence="1">
    <location>
        <begin position="106"/>
        <end position="113"/>
    </location>
    <ligand>
        <name>GTP</name>
        <dbReference type="ChEBI" id="CHEBI:37565"/>
    </ligand>
</feature>
<feature type="binding site" evidence="1">
    <location>
        <begin position="186"/>
        <end position="190"/>
    </location>
    <ligand>
        <name>GTP</name>
        <dbReference type="ChEBI" id="CHEBI:37565"/>
    </ligand>
</feature>
<feature type="binding site" evidence="1">
    <location>
        <begin position="244"/>
        <end position="247"/>
    </location>
    <ligand>
        <name>GTP</name>
        <dbReference type="ChEBI" id="CHEBI:37565"/>
    </ligand>
</feature>
<proteinExistence type="inferred from homology"/>